<proteinExistence type="inferred from homology"/>
<reference key="1">
    <citation type="submission" date="2008-02" db="EMBL/GenBank/DDBJ databases">
        <title>Complete sequence of Pseudomonas putida W619.</title>
        <authorList>
            <person name="Copeland A."/>
            <person name="Lucas S."/>
            <person name="Lapidus A."/>
            <person name="Barry K."/>
            <person name="Detter J.C."/>
            <person name="Glavina del Rio T."/>
            <person name="Dalin E."/>
            <person name="Tice H."/>
            <person name="Pitluck S."/>
            <person name="Chain P."/>
            <person name="Malfatti S."/>
            <person name="Shin M."/>
            <person name="Vergez L."/>
            <person name="Schmutz J."/>
            <person name="Larimer F."/>
            <person name="Land M."/>
            <person name="Hauser L."/>
            <person name="Kyrpides N."/>
            <person name="Kim E."/>
            <person name="Taghavi S."/>
            <person name="Vangronsveld D."/>
            <person name="van der Lelie D."/>
            <person name="Richardson P."/>
        </authorList>
    </citation>
    <scope>NUCLEOTIDE SEQUENCE [LARGE SCALE GENOMIC DNA]</scope>
    <source>
        <strain>W619</strain>
    </source>
</reference>
<name>ATPE_PSEPW</name>
<protein>
    <recommendedName>
        <fullName evidence="1">ATP synthase epsilon chain</fullName>
    </recommendedName>
    <alternativeName>
        <fullName evidence="1">ATP synthase F1 sector epsilon subunit</fullName>
    </alternativeName>
    <alternativeName>
        <fullName evidence="1">F-ATPase epsilon subunit</fullName>
    </alternativeName>
</protein>
<accession>B1JFU0</accession>
<gene>
    <name evidence="1" type="primary">atpC</name>
    <name type="ordered locus">PputW619_5199</name>
</gene>
<evidence type="ECO:0000255" key="1">
    <source>
        <dbReference type="HAMAP-Rule" id="MF_00530"/>
    </source>
</evidence>
<dbReference type="EMBL" id="CP000949">
    <property type="protein sequence ID" value="ACA75674.1"/>
    <property type="molecule type" value="Genomic_DNA"/>
</dbReference>
<dbReference type="SMR" id="B1JFU0"/>
<dbReference type="STRING" id="390235.PputW619_5199"/>
<dbReference type="KEGG" id="ppw:PputW619_5199"/>
<dbReference type="eggNOG" id="COG0355">
    <property type="taxonomic scope" value="Bacteria"/>
</dbReference>
<dbReference type="HOGENOM" id="CLU_084338_2_0_6"/>
<dbReference type="OrthoDB" id="9791445at2"/>
<dbReference type="GO" id="GO:0005886">
    <property type="term" value="C:plasma membrane"/>
    <property type="evidence" value="ECO:0007669"/>
    <property type="project" value="UniProtKB-SubCell"/>
</dbReference>
<dbReference type="GO" id="GO:0045259">
    <property type="term" value="C:proton-transporting ATP synthase complex"/>
    <property type="evidence" value="ECO:0007669"/>
    <property type="project" value="UniProtKB-KW"/>
</dbReference>
<dbReference type="GO" id="GO:0005524">
    <property type="term" value="F:ATP binding"/>
    <property type="evidence" value="ECO:0007669"/>
    <property type="project" value="UniProtKB-UniRule"/>
</dbReference>
<dbReference type="GO" id="GO:0046933">
    <property type="term" value="F:proton-transporting ATP synthase activity, rotational mechanism"/>
    <property type="evidence" value="ECO:0007669"/>
    <property type="project" value="UniProtKB-UniRule"/>
</dbReference>
<dbReference type="CDD" id="cd12152">
    <property type="entry name" value="F1-ATPase_delta"/>
    <property type="match status" value="1"/>
</dbReference>
<dbReference type="FunFam" id="2.60.15.10:FF:000001">
    <property type="entry name" value="ATP synthase epsilon chain"/>
    <property type="match status" value="1"/>
</dbReference>
<dbReference type="Gene3D" id="1.20.5.440">
    <property type="entry name" value="ATP synthase delta/epsilon subunit, C-terminal domain"/>
    <property type="match status" value="1"/>
</dbReference>
<dbReference type="Gene3D" id="2.60.15.10">
    <property type="entry name" value="F0F1 ATP synthase delta/epsilon subunit, N-terminal"/>
    <property type="match status" value="1"/>
</dbReference>
<dbReference type="HAMAP" id="MF_00530">
    <property type="entry name" value="ATP_synth_epsil_bac"/>
    <property type="match status" value="1"/>
</dbReference>
<dbReference type="InterPro" id="IPR036794">
    <property type="entry name" value="ATP_F1_dsu/esu_C_sf"/>
</dbReference>
<dbReference type="InterPro" id="IPR001469">
    <property type="entry name" value="ATP_synth_F1_dsu/esu"/>
</dbReference>
<dbReference type="InterPro" id="IPR020546">
    <property type="entry name" value="ATP_synth_F1_dsu/esu_N"/>
</dbReference>
<dbReference type="InterPro" id="IPR020547">
    <property type="entry name" value="ATP_synth_F1_esu_C"/>
</dbReference>
<dbReference type="InterPro" id="IPR036771">
    <property type="entry name" value="ATPsynth_dsu/esu_N"/>
</dbReference>
<dbReference type="NCBIfam" id="TIGR01216">
    <property type="entry name" value="ATP_synt_epsi"/>
    <property type="match status" value="1"/>
</dbReference>
<dbReference type="NCBIfam" id="NF001847">
    <property type="entry name" value="PRK00571.1-4"/>
    <property type="match status" value="1"/>
</dbReference>
<dbReference type="PANTHER" id="PTHR13822">
    <property type="entry name" value="ATP SYNTHASE DELTA/EPSILON CHAIN"/>
    <property type="match status" value="1"/>
</dbReference>
<dbReference type="PANTHER" id="PTHR13822:SF10">
    <property type="entry name" value="ATP SYNTHASE EPSILON CHAIN, CHLOROPLASTIC"/>
    <property type="match status" value="1"/>
</dbReference>
<dbReference type="Pfam" id="PF00401">
    <property type="entry name" value="ATP-synt_DE"/>
    <property type="match status" value="1"/>
</dbReference>
<dbReference type="Pfam" id="PF02823">
    <property type="entry name" value="ATP-synt_DE_N"/>
    <property type="match status" value="1"/>
</dbReference>
<dbReference type="SUPFAM" id="SSF46604">
    <property type="entry name" value="Epsilon subunit of F1F0-ATP synthase C-terminal domain"/>
    <property type="match status" value="1"/>
</dbReference>
<dbReference type="SUPFAM" id="SSF51344">
    <property type="entry name" value="Epsilon subunit of F1F0-ATP synthase N-terminal domain"/>
    <property type="match status" value="1"/>
</dbReference>
<organism>
    <name type="scientific">Pseudomonas putida (strain W619)</name>
    <dbReference type="NCBI Taxonomy" id="390235"/>
    <lineage>
        <taxon>Bacteria</taxon>
        <taxon>Pseudomonadati</taxon>
        <taxon>Pseudomonadota</taxon>
        <taxon>Gammaproteobacteria</taxon>
        <taxon>Pseudomonadales</taxon>
        <taxon>Pseudomonadaceae</taxon>
        <taxon>Pseudomonas</taxon>
    </lineage>
</organism>
<comment type="function">
    <text evidence="1">Produces ATP from ADP in the presence of a proton gradient across the membrane.</text>
</comment>
<comment type="subunit">
    <text evidence="1">F-type ATPases have 2 components, CF(1) - the catalytic core - and CF(0) - the membrane proton channel. CF(1) has five subunits: alpha(3), beta(3), gamma(1), delta(1), epsilon(1). CF(0) has three main subunits: a, b and c.</text>
</comment>
<comment type="subcellular location">
    <subcellularLocation>
        <location evidence="1">Cell inner membrane</location>
        <topology evidence="1">Peripheral membrane protein</topology>
    </subcellularLocation>
</comment>
<comment type="similarity">
    <text evidence="1">Belongs to the ATPase epsilon chain family.</text>
</comment>
<sequence length="139" mass="14548">MAMTVHCDIVSAEGEIFSGLVEMVVAHGNLGDLGIAPGHAPLITNLKPGPITLTKQGGAQEVYYISGGFLEVQPNMVKVLADTVQRATDLDEAQAQEALKAAENALSLKGADFDYGAAAARLAEAAAQLRTVQQMRKGK</sequence>
<feature type="chain" id="PRO_1000127880" description="ATP synthase epsilon chain">
    <location>
        <begin position="1"/>
        <end position="139"/>
    </location>
</feature>
<keyword id="KW-0066">ATP synthesis</keyword>
<keyword id="KW-0997">Cell inner membrane</keyword>
<keyword id="KW-1003">Cell membrane</keyword>
<keyword id="KW-0139">CF(1)</keyword>
<keyword id="KW-0375">Hydrogen ion transport</keyword>
<keyword id="KW-0406">Ion transport</keyword>
<keyword id="KW-0472">Membrane</keyword>
<keyword id="KW-0813">Transport</keyword>